<feature type="chain" id="PRO_0000415132" description="S-methyl-5'-thioadenosine phosphorylase">
    <location>
        <begin position="1"/>
        <end position="344"/>
    </location>
</feature>
<feature type="binding site" evidence="1">
    <location>
        <position position="51"/>
    </location>
    <ligand>
        <name>phosphate</name>
        <dbReference type="ChEBI" id="CHEBI:43474"/>
    </ligand>
</feature>
<feature type="binding site" evidence="1">
    <location>
        <begin position="99"/>
        <end position="100"/>
    </location>
    <ligand>
        <name>phosphate</name>
        <dbReference type="ChEBI" id="CHEBI:43474"/>
    </ligand>
</feature>
<feature type="binding site" evidence="1">
    <location>
        <begin position="132"/>
        <end position="133"/>
    </location>
    <ligand>
        <name>phosphate</name>
        <dbReference type="ChEBI" id="CHEBI:43474"/>
    </ligand>
</feature>
<feature type="binding site" evidence="1">
    <location>
        <position position="234"/>
    </location>
    <ligand>
        <name>substrate</name>
    </ligand>
</feature>
<feature type="binding site" evidence="1">
    <location>
        <position position="235"/>
    </location>
    <ligand>
        <name>phosphate</name>
        <dbReference type="ChEBI" id="CHEBI:43474"/>
    </ligand>
</feature>
<feature type="binding site" evidence="1">
    <location>
        <begin position="258"/>
        <end position="260"/>
    </location>
    <ligand>
        <name>substrate</name>
    </ligand>
</feature>
<feature type="site" description="Important for substrate specificity" evidence="1">
    <location>
        <position position="216"/>
    </location>
</feature>
<feature type="site" description="Important for substrate specificity" evidence="1">
    <location>
        <position position="272"/>
    </location>
</feature>
<dbReference type="EC" id="2.4.2.28" evidence="1"/>
<dbReference type="EMBL" id="CH445346">
    <property type="protein sequence ID" value="EAT80181.2"/>
    <property type="molecule type" value="Genomic_DNA"/>
</dbReference>
<dbReference type="RefSeq" id="XP_001802590.1">
    <property type="nucleotide sequence ID" value="XM_001802538.1"/>
</dbReference>
<dbReference type="SMR" id="Q0U796"/>
<dbReference type="FunCoup" id="Q0U796">
    <property type="interactions" value="383"/>
</dbReference>
<dbReference type="STRING" id="321614.Q0U796"/>
<dbReference type="EnsemblFungi" id="SNOT_12368">
    <property type="protein sequence ID" value="SNOT_12368"/>
    <property type="gene ID" value="SNOG_12368"/>
</dbReference>
<dbReference type="GeneID" id="5979499"/>
<dbReference type="KEGG" id="pno:SNOG_12368"/>
<dbReference type="VEuPathDB" id="FungiDB:JI435_123680"/>
<dbReference type="eggNOG" id="KOG3985">
    <property type="taxonomic scope" value="Eukaryota"/>
</dbReference>
<dbReference type="HOGENOM" id="CLU_054456_0_1_1"/>
<dbReference type="InParanoid" id="Q0U796"/>
<dbReference type="UniPathway" id="UPA00904">
    <property type="reaction ID" value="UER00873"/>
</dbReference>
<dbReference type="Proteomes" id="UP000001055">
    <property type="component" value="Unassembled WGS sequence"/>
</dbReference>
<dbReference type="GO" id="GO:0005829">
    <property type="term" value="C:cytosol"/>
    <property type="evidence" value="ECO:0000318"/>
    <property type="project" value="GO_Central"/>
</dbReference>
<dbReference type="GO" id="GO:0005634">
    <property type="term" value="C:nucleus"/>
    <property type="evidence" value="ECO:0007669"/>
    <property type="project" value="UniProtKB-SubCell"/>
</dbReference>
<dbReference type="GO" id="GO:0003729">
    <property type="term" value="F:mRNA binding"/>
    <property type="evidence" value="ECO:0007669"/>
    <property type="project" value="EnsemblFungi"/>
</dbReference>
<dbReference type="GO" id="GO:0017061">
    <property type="term" value="F:S-methyl-5-thioadenosine phosphorylase activity"/>
    <property type="evidence" value="ECO:0000318"/>
    <property type="project" value="GO_Central"/>
</dbReference>
<dbReference type="GO" id="GO:0006537">
    <property type="term" value="P:glutamate biosynthetic process"/>
    <property type="evidence" value="ECO:0007669"/>
    <property type="project" value="EnsemblFungi"/>
</dbReference>
<dbReference type="GO" id="GO:0019509">
    <property type="term" value="P:L-methionine salvage from methylthioadenosine"/>
    <property type="evidence" value="ECO:0000318"/>
    <property type="project" value="GO_Central"/>
</dbReference>
<dbReference type="GO" id="GO:0006166">
    <property type="term" value="P:purine ribonucleoside salvage"/>
    <property type="evidence" value="ECO:0007669"/>
    <property type="project" value="UniProtKB-KW"/>
</dbReference>
<dbReference type="CDD" id="cd09010">
    <property type="entry name" value="MTAP_SsMTAPII_like_MTIP"/>
    <property type="match status" value="1"/>
</dbReference>
<dbReference type="FunFam" id="3.40.50.1580:FF:000008">
    <property type="entry name" value="S-methyl-5'-thioadenosine phosphorylase"/>
    <property type="match status" value="1"/>
</dbReference>
<dbReference type="Gene3D" id="3.40.50.1580">
    <property type="entry name" value="Nucleoside phosphorylase domain"/>
    <property type="match status" value="1"/>
</dbReference>
<dbReference type="HAMAP" id="MF_01963">
    <property type="entry name" value="MTAP"/>
    <property type="match status" value="1"/>
</dbReference>
<dbReference type="InterPro" id="IPR010044">
    <property type="entry name" value="MTAP"/>
</dbReference>
<dbReference type="InterPro" id="IPR000845">
    <property type="entry name" value="Nucleoside_phosphorylase_d"/>
</dbReference>
<dbReference type="InterPro" id="IPR035994">
    <property type="entry name" value="Nucleoside_phosphorylase_sf"/>
</dbReference>
<dbReference type="NCBIfam" id="TIGR01694">
    <property type="entry name" value="MTAP"/>
    <property type="match status" value="1"/>
</dbReference>
<dbReference type="PANTHER" id="PTHR42679">
    <property type="entry name" value="S-METHYL-5'-THIOADENOSINE PHOSPHORYLASE"/>
    <property type="match status" value="1"/>
</dbReference>
<dbReference type="PANTHER" id="PTHR42679:SF2">
    <property type="entry name" value="S-METHYL-5'-THIOADENOSINE PHOSPHORYLASE"/>
    <property type="match status" value="1"/>
</dbReference>
<dbReference type="Pfam" id="PF01048">
    <property type="entry name" value="PNP_UDP_1"/>
    <property type="match status" value="1"/>
</dbReference>
<dbReference type="SUPFAM" id="SSF53167">
    <property type="entry name" value="Purine and uridine phosphorylases"/>
    <property type="match status" value="1"/>
</dbReference>
<protein>
    <recommendedName>
        <fullName evidence="1">S-methyl-5'-thioadenosine phosphorylase</fullName>
        <ecNumber evidence="1">2.4.2.28</ecNumber>
    </recommendedName>
    <alternativeName>
        <fullName evidence="1">5'-methylthioadenosine phosphorylase</fullName>
        <shortName evidence="1">MTA phosphorylase</shortName>
        <shortName evidence="1">MTAP</shortName>
        <shortName evidence="1">MTAPase</shortName>
    </alternativeName>
</protein>
<proteinExistence type="inferred from homology"/>
<name>MTAP_PHANO</name>
<keyword id="KW-0963">Cytoplasm</keyword>
<keyword id="KW-0328">Glycosyltransferase</keyword>
<keyword id="KW-0539">Nucleus</keyword>
<keyword id="KW-0660">Purine salvage</keyword>
<keyword id="KW-0808">Transferase</keyword>
<evidence type="ECO:0000255" key="1">
    <source>
        <dbReference type="HAMAP-Rule" id="MF_03155"/>
    </source>
</evidence>
<sequence>MLQRARLWPPIFTSRCAPFPFSRSISIPYRRMAGVPSTYDAPVHIAVIGGTGISSLPGFELAATLDVDTPWGKPSSPISILQHNSPTTGKPVPVAFLSRHGLHHEHAPHEVKNQANIAALRHIGVRTIIAFSAVGSLQEEVRPRDFVVPDQIIDRTKGIRPFTFFEKGMVGHVGFGDPFDKSLAEIVRKCGHSLEGEGVRLHDKGLLICMEGPQFSTRAESNLYRTWGGSVINMSALPEAKLAREAEISYQMICMATDYDCWRGDGSEDVNVEMVMAHMKANAENARRFVGAVLNELTKEEHGELVLAKHIEGQMRFAGAMTKKEGRGQDAEKKLQWLFPGYFD</sequence>
<organism>
    <name type="scientific">Phaeosphaeria nodorum (strain SN15 / ATCC MYA-4574 / FGSC 10173)</name>
    <name type="common">Glume blotch fungus</name>
    <name type="synonym">Parastagonospora nodorum</name>
    <dbReference type="NCBI Taxonomy" id="321614"/>
    <lineage>
        <taxon>Eukaryota</taxon>
        <taxon>Fungi</taxon>
        <taxon>Dikarya</taxon>
        <taxon>Ascomycota</taxon>
        <taxon>Pezizomycotina</taxon>
        <taxon>Dothideomycetes</taxon>
        <taxon>Pleosporomycetidae</taxon>
        <taxon>Pleosporales</taxon>
        <taxon>Pleosporineae</taxon>
        <taxon>Phaeosphaeriaceae</taxon>
        <taxon>Parastagonospora</taxon>
    </lineage>
</organism>
<accession>Q0U796</accession>
<comment type="function">
    <text evidence="1">Catalyzes the reversible phosphorylation of S-methyl-5'-thioadenosine (MTA) to adenine and 5-methylthioribose-1-phosphate. Involved in the breakdown of MTA, a major by-product of polyamine biosynthesis. Responsible for the first step in the methionine salvage pathway after MTA has been generated from S-adenosylmethionine. Has broad substrate specificity with 6-aminopurine nucleosides as preferred substrates.</text>
</comment>
<comment type="catalytic activity">
    <reaction evidence="1">
        <text>S-methyl-5'-thioadenosine + phosphate = 5-(methylsulfanyl)-alpha-D-ribose 1-phosphate + adenine</text>
        <dbReference type="Rhea" id="RHEA:11852"/>
        <dbReference type="ChEBI" id="CHEBI:16708"/>
        <dbReference type="ChEBI" id="CHEBI:17509"/>
        <dbReference type="ChEBI" id="CHEBI:43474"/>
        <dbReference type="ChEBI" id="CHEBI:58533"/>
        <dbReference type="EC" id="2.4.2.28"/>
    </reaction>
</comment>
<comment type="pathway">
    <text evidence="1">Amino-acid biosynthesis; L-methionine biosynthesis via salvage pathway; S-methyl-5-thio-alpha-D-ribose 1-phosphate from S-methyl-5'-thioadenosine (phosphorylase route): step 1/1.</text>
</comment>
<comment type="subunit">
    <text evidence="1">Homotrimer.</text>
</comment>
<comment type="subcellular location">
    <subcellularLocation>
        <location evidence="1">Cytoplasm</location>
    </subcellularLocation>
    <subcellularLocation>
        <location evidence="1">Nucleus</location>
    </subcellularLocation>
</comment>
<comment type="similarity">
    <text evidence="1">Belongs to the PNP/MTAP phosphorylase family. MTAP subfamily.</text>
</comment>
<reference key="1">
    <citation type="journal article" date="2007" name="Plant Cell">
        <title>Dothideomycete-plant interactions illuminated by genome sequencing and EST analysis of the wheat pathogen Stagonospora nodorum.</title>
        <authorList>
            <person name="Hane J.K."/>
            <person name="Lowe R.G.T."/>
            <person name="Solomon P.S."/>
            <person name="Tan K.-C."/>
            <person name="Schoch C.L."/>
            <person name="Spatafora J.W."/>
            <person name="Crous P.W."/>
            <person name="Kodira C.D."/>
            <person name="Birren B.W."/>
            <person name="Galagan J.E."/>
            <person name="Torriani S.F.F."/>
            <person name="McDonald B.A."/>
            <person name="Oliver R.P."/>
        </authorList>
    </citation>
    <scope>NUCLEOTIDE SEQUENCE [LARGE SCALE GENOMIC DNA]</scope>
    <source>
        <strain>SN15 / ATCC MYA-4574 / FGSC 10173</strain>
    </source>
</reference>
<gene>
    <name type="ORF">SNOG_12368</name>
</gene>